<keyword id="KW-0150">Chloroplast</keyword>
<keyword id="KW-0934">Plastid</keyword>
<keyword id="KW-1185">Reference proteome</keyword>
<keyword id="KW-0687">Ribonucleoprotein</keyword>
<keyword id="KW-0689">Ribosomal protein</keyword>
<keyword id="KW-0694">RNA-binding</keyword>
<keyword id="KW-0699">rRNA-binding</keyword>
<gene>
    <name type="primary">rpl20</name>
    <name type="ordered locus">AtCg00660</name>
</gene>
<evidence type="ECO:0000250" key="1"/>
<evidence type="ECO:0000303" key="2">
    <source>
    </source>
</evidence>
<evidence type="ECO:0000305" key="3"/>
<name>RK20_ARATH</name>
<sequence length="117" mass="14163">MTRIKRGYIARRRRTKLRLFASSFRGAHSRLTRTMTQQRIRALVSAHRDRGKRKRDFRRLWITRINAVIHEMGVFYSYNEFIHNLYKKQLLLNRKILAQIALLNRSCLYTISNDIKK</sequence>
<accession>P56794</accession>
<comment type="function">
    <text evidence="1">Binds directly to 23S ribosomal RNA and is necessary for the in vitro assembly process of the 50S ribosomal subunit. It is not involved in the protein synthesizing functions of that subunit (By similarity).</text>
</comment>
<comment type="subcellular location">
    <subcellularLocation>
        <location>Plastid</location>
        <location>Chloroplast</location>
    </subcellularLocation>
</comment>
<comment type="similarity">
    <text evidence="3">Belongs to the bacterial ribosomal protein bL20 family.</text>
</comment>
<geneLocation type="chloroplast"/>
<organism>
    <name type="scientific">Arabidopsis thaliana</name>
    <name type="common">Mouse-ear cress</name>
    <dbReference type="NCBI Taxonomy" id="3702"/>
    <lineage>
        <taxon>Eukaryota</taxon>
        <taxon>Viridiplantae</taxon>
        <taxon>Streptophyta</taxon>
        <taxon>Embryophyta</taxon>
        <taxon>Tracheophyta</taxon>
        <taxon>Spermatophyta</taxon>
        <taxon>Magnoliopsida</taxon>
        <taxon>eudicotyledons</taxon>
        <taxon>Gunneridae</taxon>
        <taxon>Pentapetalae</taxon>
        <taxon>rosids</taxon>
        <taxon>malvids</taxon>
        <taxon>Brassicales</taxon>
        <taxon>Brassicaceae</taxon>
        <taxon>Camelineae</taxon>
        <taxon>Arabidopsis</taxon>
    </lineage>
</organism>
<reference key="1">
    <citation type="journal article" date="1999" name="DNA Res.">
        <title>Complete structure of the chloroplast genome of Arabidopsis thaliana.</title>
        <authorList>
            <person name="Sato S."/>
            <person name="Nakamura Y."/>
            <person name="Kaneko T."/>
            <person name="Asamizu E."/>
            <person name="Tabata S."/>
        </authorList>
    </citation>
    <scope>NUCLEOTIDE SEQUENCE [LARGE SCALE GENOMIC DNA]</scope>
    <source>
        <strain>cv. Columbia</strain>
    </source>
</reference>
<reference key="2">
    <citation type="journal article" date="2023" name="Plant Cell">
        <title>An updated nomenclature for plant ribosomal protein genes.</title>
        <authorList>
            <person name="Scarpin M.R."/>
            <person name="Busche M."/>
            <person name="Martinez R.E."/>
            <person name="Harper L.C."/>
            <person name="Reiser L."/>
            <person name="Szakonyi D."/>
            <person name="Merchante C."/>
            <person name="Lan T."/>
            <person name="Xiong W."/>
            <person name="Mo B."/>
            <person name="Tang G."/>
            <person name="Chen X."/>
            <person name="Bailey-Serres J."/>
            <person name="Browning K.S."/>
            <person name="Brunkard J.O."/>
        </authorList>
    </citation>
    <scope>NOMENCLATURE</scope>
</reference>
<dbReference type="EMBL" id="AP000423">
    <property type="protein sequence ID" value="BAA84408.1"/>
    <property type="molecule type" value="Genomic_DNA"/>
</dbReference>
<dbReference type="RefSeq" id="NP_051082.1">
    <property type="nucleotide sequence ID" value="NC_000932.1"/>
</dbReference>
<dbReference type="SMR" id="P56794"/>
<dbReference type="FunCoup" id="P56794">
    <property type="interactions" value="48"/>
</dbReference>
<dbReference type="STRING" id="3702.P56794"/>
<dbReference type="PaxDb" id="3702-ATCG00660.1"/>
<dbReference type="ProteomicsDB" id="234846"/>
<dbReference type="EnsemblPlants" id="ATCG00660.1">
    <property type="protein sequence ID" value="ATCG00660.1"/>
    <property type="gene ID" value="ATCG00660"/>
</dbReference>
<dbReference type="GeneID" id="844735"/>
<dbReference type="Gramene" id="ATCG00660.1">
    <property type="protein sequence ID" value="ATCG00660.1"/>
    <property type="gene ID" value="ATCG00660"/>
</dbReference>
<dbReference type="KEGG" id="ath:ArthCp045"/>
<dbReference type="Araport" id="ATCG00660"/>
<dbReference type="TAIR" id="ATCG00660">
    <property type="gene designation" value="RPL20"/>
</dbReference>
<dbReference type="eggNOG" id="KOG4707">
    <property type="taxonomic scope" value="Eukaryota"/>
</dbReference>
<dbReference type="HOGENOM" id="CLU_123265_0_1_1"/>
<dbReference type="InParanoid" id="P56794"/>
<dbReference type="OMA" id="IHETEVF"/>
<dbReference type="PRO" id="PR:P56794"/>
<dbReference type="Proteomes" id="UP000006548">
    <property type="component" value="Chloroplast Pltd"/>
</dbReference>
<dbReference type="ExpressionAtlas" id="P56794">
    <property type="expression patterns" value="baseline and differential"/>
</dbReference>
<dbReference type="GO" id="GO:0009507">
    <property type="term" value="C:chloroplast"/>
    <property type="evidence" value="ECO:0007005"/>
    <property type="project" value="TAIR"/>
</dbReference>
<dbReference type="GO" id="GO:0009941">
    <property type="term" value="C:chloroplast envelope"/>
    <property type="evidence" value="ECO:0007005"/>
    <property type="project" value="TAIR"/>
</dbReference>
<dbReference type="GO" id="GO:0009570">
    <property type="term" value="C:chloroplast stroma"/>
    <property type="evidence" value="ECO:0007005"/>
    <property type="project" value="TAIR"/>
</dbReference>
<dbReference type="GO" id="GO:0009536">
    <property type="term" value="C:plastid"/>
    <property type="evidence" value="ECO:0007005"/>
    <property type="project" value="TAIR"/>
</dbReference>
<dbReference type="GO" id="GO:1990904">
    <property type="term" value="C:ribonucleoprotein complex"/>
    <property type="evidence" value="ECO:0007669"/>
    <property type="project" value="UniProtKB-KW"/>
</dbReference>
<dbReference type="GO" id="GO:0005840">
    <property type="term" value="C:ribosome"/>
    <property type="evidence" value="ECO:0007669"/>
    <property type="project" value="UniProtKB-KW"/>
</dbReference>
<dbReference type="GO" id="GO:0003729">
    <property type="term" value="F:mRNA binding"/>
    <property type="evidence" value="ECO:0000314"/>
    <property type="project" value="TAIR"/>
</dbReference>
<dbReference type="GO" id="GO:0019843">
    <property type="term" value="F:rRNA binding"/>
    <property type="evidence" value="ECO:0007669"/>
    <property type="project" value="UniProtKB-UniRule"/>
</dbReference>
<dbReference type="GO" id="GO:0003735">
    <property type="term" value="F:structural constituent of ribosome"/>
    <property type="evidence" value="ECO:0007669"/>
    <property type="project" value="InterPro"/>
</dbReference>
<dbReference type="GO" id="GO:0000027">
    <property type="term" value="P:ribosomal large subunit assembly"/>
    <property type="evidence" value="ECO:0007669"/>
    <property type="project" value="UniProtKB-UniRule"/>
</dbReference>
<dbReference type="GO" id="GO:0006412">
    <property type="term" value="P:translation"/>
    <property type="evidence" value="ECO:0007669"/>
    <property type="project" value="InterPro"/>
</dbReference>
<dbReference type="CDD" id="cd07026">
    <property type="entry name" value="Ribosomal_L20"/>
    <property type="match status" value="1"/>
</dbReference>
<dbReference type="FunFam" id="1.10.1900.20:FF:000001">
    <property type="entry name" value="50S ribosomal protein L20"/>
    <property type="match status" value="1"/>
</dbReference>
<dbReference type="Gene3D" id="6.10.160.10">
    <property type="match status" value="1"/>
</dbReference>
<dbReference type="Gene3D" id="1.10.1900.20">
    <property type="entry name" value="Ribosomal protein L20"/>
    <property type="match status" value="1"/>
</dbReference>
<dbReference type="HAMAP" id="MF_00382">
    <property type="entry name" value="Ribosomal_bL20"/>
    <property type="match status" value="1"/>
</dbReference>
<dbReference type="InterPro" id="IPR005813">
    <property type="entry name" value="Ribosomal_bL20"/>
</dbReference>
<dbReference type="InterPro" id="IPR049946">
    <property type="entry name" value="RIBOSOMAL_L20_CS"/>
</dbReference>
<dbReference type="InterPro" id="IPR035566">
    <property type="entry name" value="Ribosomal_protein_bL20_C"/>
</dbReference>
<dbReference type="NCBIfam" id="TIGR01032">
    <property type="entry name" value="rplT_bact"/>
    <property type="match status" value="1"/>
</dbReference>
<dbReference type="PANTHER" id="PTHR10986">
    <property type="entry name" value="39S RIBOSOMAL PROTEIN L20"/>
    <property type="match status" value="1"/>
</dbReference>
<dbReference type="Pfam" id="PF00453">
    <property type="entry name" value="Ribosomal_L20"/>
    <property type="match status" value="1"/>
</dbReference>
<dbReference type="PRINTS" id="PR00062">
    <property type="entry name" value="RIBOSOMALL20"/>
</dbReference>
<dbReference type="SUPFAM" id="SSF74731">
    <property type="entry name" value="Ribosomal protein L20"/>
    <property type="match status" value="1"/>
</dbReference>
<dbReference type="PROSITE" id="PS00937">
    <property type="entry name" value="RIBOSOMAL_L20"/>
    <property type="match status" value="1"/>
</dbReference>
<feature type="chain" id="PRO_0000177278" description="Large ribosomal subunit protein bL20c">
    <location>
        <begin position="1"/>
        <end position="117"/>
    </location>
</feature>
<proteinExistence type="inferred from homology"/>
<protein>
    <recommendedName>
        <fullName evidence="2">Large ribosomal subunit protein bL20c</fullName>
    </recommendedName>
    <alternativeName>
        <fullName>50S ribosomal protein L20, chloroplastic</fullName>
    </alternativeName>
</protein>